<dbReference type="Proteomes" id="UP001155700">
    <property type="component" value="Unplaced"/>
</dbReference>
<dbReference type="GO" id="GO:0005576">
    <property type="term" value="C:extracellular region"/>
    <property type="evidence" value="ECO:0007669"/>
    <property type="project" value="UniProtKB-KW"/>
</dbReference>
<dbReference type="GO" id="GO:0042742">
    <property type="term" value="P:defense response to bacterium"/>
    <property type="evidence" value="ECO:0007669"/>
    <property type="project" value="UniProtKB-KW"/>
</dbReference>
<dbReference type="GO" id="GO:0050832">
    <property type="term" value="P:defense response to fungus"/>
    <property type="evidence" value="ECO:0007669"/>
    <property type="project" value="UniProtKB-KW"/>
</dbReference>
<dbReference type="GO" id="GO:0031640">
    <property type="term" value="P:killing of cells of another organism"/>
    <property type="evidence" value="ECO:0007669"/>
    <property type="project" value="UniProtKB-KW"/>
</dbReference>
<organism evidence="1">
    <name type="scientific">Spinacia oleracea</name>
    <name type="common">Spinach</name>
    <dbReference type="NCBI Taxonomy" id="3562"/>
    <lineage>
        <taxon>Eukaryota</taxon>
        <taxon>Viridiplantae</taxon>
        <taxon>Streptophyta</taxon>
        <taxon>Embryophyta</taxon>
        <taxon>Tracheophyta</taxon>
        <taxon>Spermatophyta</taxon>
        <taxon>Magnoliopsida</taxon>
        <taxon>eudicotyledons</taxon>
        <taxon>Gunneridae</taxon>
        <taxon>Pentapetalae</taxon>
        <taxon>Caryophyllales</taxon>
        <taxon>Chenopodiaceae</taxon>
        <taxon>Chenopodioideae</taxon>
        <taxon>Anserineae</taxon>
        <taxon>Spinacia</taxon>
    </lineage>
</organism>
<keyword id="KW-0044">Antibiotic</keyword>
<keyword id="KW-0929">Antimicrobial</keyword>
<keyword id="KW-0134">Cell wall</keyword>
<keyword id="KW-0903">Direct protein sequencing</keyword>
<keyword id="KW-0295">Fungicide</keyword>
<keyword id="KW-0611">Plant defense</keyword>
<keyword id="KW-1185">Reference proteome</keyword>
<keyword id="KW-0964">Secreted</keyword>
<proteinExistence type="evidence at protein level"/>
<protein>
    <recommendedName>
        <fullName>Defensin D3</fullName>
    </recommendedName>
    <alternativeName>
        <fullName>Antimicrobial peptide D3</fullName>
    </alternativeName>
    <alternativeName>
        <fullName>So-D3</fullName>
    </alternativeName>
</protein>
<name>DEFD3_SPIOL</name>
<feature type="chain" id="PRO_0000074253" description="Defensin D3">
    <location>
        <begin position="1"/>
        <end position="25" status="greater than"/>
    </location>
</feature>
<feature type="non-terminal residue" evidence="1">
    <location>
        <position position="25"/>
    </location>
</feature>
<accession>P81570</accession>
<comment type="function">
    <text>Antimicrobial peptide. Active against Fusarium spp., Gram-positive and Gram-negative bacterial pathogens.</text>
</comment>
<comment type="subcellular location">
    <subcellularLocation>
        <location evidence="1">Secreted</location>
        <location evidence="1">Cell wall</location>
    </subcellularLocation>
</comment>
<comment type="tissue specificity">
    <text>Distributed in the epidermal cell layer of leaves and in the subepidermal layer region of stems. Not in roots.</text>
</comment>
<comment type="developmental stage">
    <text>Present throughout the life of the leaf.</text>
</comment>
<comment type="similarity">
    <text evidence="1">Belongs to the DEFL family. Group IV subfamily.</text>
</comment>
<sequence>GIFSSRKCKTVSKTFRGICTRNANC</sequence>
<reference evidence="1" key="1">
    <citation type="journal article" date="1998" name="FEBS Lett.">
        <title>Novel defensin subfamily from spinach (Spinacia oleracea).</title>
        <authorList>
            <person name="Segura A."/>
            <person name="Moreno M."/>
            <person name="Molina A."/>
            <person name="Garcia-Olmedo F."/>
        </authorList>
    </citation>
    <scope>PROTEIN SEQUENCE</scope>
    <source>
        <strain>cv. Matador</strain>
        <tissue>Leaf</tissue>
    </source>
</reference>
<evidence type="ECO:0000305" key="1"/>